<keyword id="KW-0119">Carbohydrate metabolism</keyword>
<keyword id="KW-0903">Direct protein sequencing</keyword>
<keyword id="KW-0325">Glycoprotein</keyword>
<keyword id="KW-0326">Glycosidase</keyword>
<keyword id="KW-0378">Hydrolase</keyword>
<keyword id="KW-0624">Polysaccharide degradation</keyword>
<keyword id="KW-0964">Secreted</keyword>
<keyword id="KW-0732">Signal</keyword>
<keyword id="KW-0858">Xylan degradation</keyword>
<feature type="signal peptide" evidence="2">
    <location>
        <begin position="1"/>
        <end position="26"/>
    </location>
</feature>
<feature type="chain" id="PRO_0000008035" description="Probable alpha-L-arabinofuranosidase axhA">
    <location>
        <begin position="27"/>
        <end position="332"/>
    </location>
</feature>
<feature type="glycosylation site" description="N-linked (GlcNAc...) asparagine" evidence="2">
    <location>
        <position position="313"/>
    </location>
</feature>
<proteinExistence type="evidence at protein level"/>
<comment type="function">
    <text evidence="1">Alpha-L-arabinofuranosidase involved in the hydrolysis of xylan, a major structural heterogeneous polysaccharide found in plant biomass representing the second most abundant polysaccharide in the biosphere, after cellulose. Releases L-arabinose from arabinoxylan (By similarity).</text>
</comment>
<comment type="catalytic activity">
    <reaction>
        <text>Hydrolysis of terminal non-reducing alpha-L-arabinofuranoside residues in alpha-L-arabinosides.</text>
        <dbReference type="EC" id="3.2.1.55"/>
    </reaction>
</comment>
<comment type="subcellular location">
    <subcellularLocation>
        <location evidence="3">Secreted</location>
    </subcellularLocation>
</comment>
<comment type="similarity">
    <text evidence="4">Belongs to the glycosyl hydrolase 62 family.</text>
</comment>
<organism>
    <name type="scientific">Aspergillus tubingensis</name>
    <dbReference type="NCBI Taxonomy" id="5068"/>
    <lineage>
        <taxon>Eukaryota</taxon>
        <taxon>Fungi</taxon>
        <taxon>Dikarya</taxon>
        <taxon>Ascomycota</taxon>
        <taxon>Pezizomycotina</taxon>
        <taxon>Eurotiomycetes</taxon>
        <taxon>Eurotiomycetidae</taxon>
        <taxon>Eurotiales</taxon>
        <taxon>Aspergillaceae</taxon>
        <taxon>Aspergillus</taxon>
        <taxon>Aspergillus subgen. Circumdati</taxon>
    </lineage>
</organism>
<protein>
    <recommendedName>
        <fullName>Probable alpha-L-arabinofuranosidase axhA</fullName>
        <ecNumber>3.2.1.55</ecNumber>
    </recommendedName>
    <alternativeName>
        <fullName>Arabinoxylan arabinofuranohydrolase axhA</fullName>
    </alternativeName>
</protein>
<reference key="1">
    <citation type="journal article" date="1997" name="Curr. Genet.">
        <title>Arabinoxylan degradation by fungi: characterization of the arabinoxylan-arabinofuranohydrolase encoding genes from Aspergillus niger and Aspergillus tubingensis.</title>
        <authorList>
            <person name="Gielkens M.M.C."/>
            <person name="Visser J."/>
            <person name="de Graaff L.H."/>
        </authorList>
    </citation>
    <scope>NUCLEOTIDE SEQUENCE [GENOMIC DNA]</scope>
    <scope>PROTEIN SEQUENCE OF 27-34 AND 233-245</scope>
    <scope>SUBCELLULAR LOCATION</scope>
</reference>
<sequence length="332" mass="36050">MKFFKAKGSLLSSGIYLIALTPFVNAKCALPSSYSWSSTDALATPKSGWTALKDFTDVVSDGKHIVYASTTDEAGNYGSMTFGAFSEWSNMASASQTATPFNAVAPTLFYFKPKSIWVLAYQWGSSTFTYRTSQDPTNVNGWSSEQALFTGKISDSSTNAIDQTVIGDDTNMYLFFAGDNGKIYRSSMSINDFPGSFGSQYEVILSGARNDLFEAVQVYTVDGGEGDTKYLMIVEAIGSTGHRYFRSFTASSLGGEWTAQAASEDQPFAGKANSGATWTEDISHGDLVRNNPDQTMTVDPCNLQLLYQGHDPNSSGDYNLLPWKPGVLTLKQ</sequence>
<evidence type="ECO:0000250" key="1"/>
<evidence type="ECO:0000255" key="2"/>
<evidence type="ECO:0000269" key="3">
    <source>
    </source>
</evidence>
<evidence type="ECO:0000305" key="4"/>
<name>AXHA_ASPTU</name>
<gene>
    <name type="primary">axhA</name>
</gene>
<accession>P79021</accession>
<dbReference type="EC" id="3.2.1.55"/>
<dbReference type="EMBL" id="Z78010">
    <property type="protein sequence ID" value="CAB01408.1"/>
    <property type="molecule type" value="Genomic_DNA"/>
</dbReference>
<dbReference type="SMR" id="P79021"/>
<dbReference type="CAZy" id="GH62">
    <property type="family name" value="Glycoside Hydrolase Family 62"/>
</dbReference>
<dbReference type="GlyCosmos" id="P79021">
    <property type="glycosylation" value="1 site, No reported glycans"/>
</dbReference>
<dbReference type="VEuPathDB" id="FungiDB:ASPTUDRAFT_40721"/>
<dbReference type="GO" id="GO:0005576">
    <property type="term" value="C:extracellular region"/>
    <property type="evidence" value="ECO:0007669"/>
    <property type="project" value="UniProtKB-SubCell"/>
</dbReference>
<dbReference type="GO" id="GO:0046556">
    <property type="term" value="F:alpha-L-arabinofuranosidase activity"/>
    <property type="evidence" value="ECO:0007669"/>
    <property type="project" value="UniProtKB-EC"/>
</dbReference>
<dbReference type="GO" id="GO:0046373">
    <property type="term" value="P:L-arabinose metabolic process"/>
    <property type="evidence" value="ECO:0007669"/>
    <property type="project" value="InterPro"/>
</dbReference>
<dbReference type="GO" id="GO:0045493">
    <property type="term" value="P:xylan catabolic process"/>
    <property type="evidence" value="ECO:0007669"/>
    <property type="project" value="UniProtKB-KW"/>
</dbReference>
<dbReference type="CDD" id="cd08987">
    <property type="entry name" value="GH62"/>
    <property type="match status" value="1"/>
</dbReference>
<dbReference type="Gene3D" id="2.115.10.20">
    <property type="entry name" value="Glycosyl hydrolase domain, family 43"/>
    <property type="match status" value="1"/>
</dbReference>
<dbReference type="InterPro" id="IPR005193">
    <property type="entry name" value="GH62_arabinosidase"/>
</dbReference>
<dbReference type="InterPro" id="IPR023296">
    <property type="entry name" value="Glyco_hydro_beta-prop_sf"/>
</dbReference>
<dbReference type="PANTHER" id="PTHR40631">
    <property type="entry name" value="ALPHA-L-ARABINOFURANOSIDASE AXHA-2-RELATED"/>
    <property type="match status" value="1"/>
</dbReference>
<dbReference type="PANTHER" id="PTHR40631:SF1">
    <property type="entry name" value="ALPHA-L-ARABINOFURANOSIDASE AXHA-2-RELATED"/>
    <property type="match status" value="1"/>
</dbReference>
<dbReference type="Pfam" id="PF03664">
    <property type="entry name" value="Glyco_hydro_62"/>
    <property type="match status" value="1"/>
</dbReference>
<dbReference type="SUPFAM" id="SSF75005">
    <property type="entry name" value="Arabinanase/levansucrase/invertase"/>
    <property type="match status" value="1"/>
</dbReference>